<keyword id="KW-0131">Cell cycle</keyword>
<keyword id="KW-0132">Cell division</keyword>
<keyword id="KW-0133">Cell shape</keyword>
<keyword id="KW-0961">Cell wall biogenesis/degradation</keyword>
<keyword id="KW-0963">Cytoplasm</keyword>
<keyword id="KW-0274">FAD</keyword>
<keyword id="KW-0285">Flavoprotein</keyword>
<keyword id="KW-0521">NADP</keyword>
<keyword id="KW-0560">Oxidoreductase</keyword>
<keyword id="KW-0573">Peptidoglycan synthesis</keyword>
<keyword id="KW-1185">Reference proteome</keyword>
<comment type="function">
    <text evidence="1">Cell wall formation.</text>
</comment>
<comment type="catalytic activity">
    <reaction evidence="1">
        <text>UDP-N-acetyl-alpha-D-muramate + NADP(+) = UDP-N-acetyl-3-O-(1-carboxyvinyl)-alpha-D-glucosamine + NADPH + H(+)</text>
        <dbReference type="Rhea" id="RHEA:12248"/>
        <dbReference type="ChEBI" id="CHEBI:15378"/>
        <dbReference type="ChEBI" id="CHEBI:57783"/>
        <dbReference type="ChEBI" id="CHEBI:58349"/>
        <dbReference type="ChEBI" id="CHEBI:68483"/>
        <dbReference type="ChEBI" id="CHEBI:70757"/>
        <dbReference type="EC" id="1.3.1.98"/>
    </reaction>
</comment>
<comment type="cofactor">
    <cofactor evidence="1">
        <name>FAD</name>
        <dbReference type="ChEBI" id="CHEBI:57692"/>
    </cofactor>
</comment>
<comment type="pathway">
    <text evidence="1">Cell wall biogenesis; peptidoglycan biosynthesis.</text>
</comment>
<comment type="subcellular location">
    <subcellularLocation>
        <location evidence="1">Cytoplasm</location>
    </subcellularLocation>
</comment>
<comment type="similarity">
    <text evidence="1">Belongs to the MurB family.</text>
</comment>
<gene>
    <name evidence="1" type="primary">murB</name>
    <name type="ordered locus">Sala_1879</name>
</gene>
<evidence type="ECO:0000255" key="1">
    <source>
        <dbReference type="HAMAP-Rule" id="MF_00037"/>
    </source>
</evidence>
<evidence type="ECO:0000256" key="2">
    <source>
        <dbReference type="SAM" id="MobiDB-lite"/>
    </source>
</evidence>
<feature type="chain" id="PRO_0000332507" description="UDP-N-acetylenolpyruvoylglucosamine reductase">
    <location>
        <begin position="1"/>
        <end position="299"/>
    </location>
</feature>
<feature type="domain" description="FAD-binding PCMH-type" evidence="1">
    <location>
        <begin position="27"/>
        <end position="192"/>
    </location>
</feature>
<feature type="region of interest" description="Disordered" evidence="2">
    <location>
        <begin position="206"/>
        <end position="225"/>
    </location>
</feature>
<feature type="compositionally biased region" description="Polar residues" evidence="2">
    <location>
        <begin position="208"/>
        <end position="224"/>
    </location>
</feature>
<feature type="active site" evidence="1">
    <location>
        <position position="172"/>
    </location>
</feature>
<feature type="active site" description="Proton donor" evidence="1">
    <location>
        <position position="221"/>
    </location>
</feature>
<feature type="active site" evidence="1">
    <location>
        <position position="291"/>
    </location>
</feature>
<protein>
    <recommendedName>
        <fullName evidence="1">UDP-N-acetylenolpyruvoylglucosamine reductase</fullName>
        <ecNumber evidence="1">1.3.1.98</ecNumber>
    </recommendedName>
    <alternativeName>
        <fullName evidence="1">UDP-N-acetylmuramate dehydrogenase</fullName>
    </alternativeName>
</protein>
<organism>
    <name type="scientific">Sphingopyxis alaskensis (strain DSM 13593 / LMG 18877 / RB2256)</name>
    <name type="common">Sphingomonas alaskensis</name>
    <dbReference type="NCBI Taxonomy" id="317655"/>
    <lineage>
        <taxon>Bacteria</taxon>
        <taxon>Pseudomonadati</taxon>
        <taxon>Pseudomonadota</taxon>
        <taxon>Alphaproteobacteria</taxon>
        <taxon>Sphingomonadales</taxon>
        <taxon>Sphingomonadaceae</taxon>
        <taxon>Sphingopyxis</taxon>
    </lineage>
</organism>
<reference key="1">
    <citation type="journal article" date="2009" name="Proc. Natl. Acad. Sci. U.S.A.">
        <title>The genomic basis of trophic strategy in marine bacteria.</title>
        <authorList>
            <person name="Lauro F.M."/>
            <person name="McDougald D."/>
            <person name="Thomas T."/>
            <person name="Williams T.J."/>
            <person name="Egan S."/>
            <person name="Rice S."/>
            <person name="DeMaere M.Z."/>
            <person name="Ting L."/>
            <person name="Ertan H."/>
            <person name="Johnson J."/>
            <person name="Ferriera S."/>
            <person name="Lapidus A."/>
            <person name="Anderson I."/>
            <person name="Kyrpides N."/>
            <person name="Munk A.C."/>
            <person name="Detter C."/>
            <person name="Han C.S."/>
            <person name="Brown M.V."/>
            <person name="Robb F.T."/>
            <person name="Kjelleberg S."/>
            <person name="Cavicchioli R."/>
        </authorList>
    </citation>
    <scope>NUCLEOTIDE SEQUENCE [LARGE SCALE GENOMIC DNA]</scope>
    <source>
        <strain>DSM 13593 / LMG 18877 / RB2256</strain>
    </source>
</reference>
<sequence length="299" mass="31358">MSATATLPAVRGKLTPQAPLAPLVWFKSGGAADWLFEPKDVDDLADFLRDLDPAIPVMALGLGSNLIVRDGGFPGVVVRLGKAFAKVEPIDATTLRCGGGASGILVSSTARDAGIAGMEFLRSIPGTVGGFVRMNGGAYGGEVKDILVDCDVVLRSGERKTLALADLGYTYRHSELPEGAVVVGATFRGRPGASAAIQAEMDRISASREASQPLRSRTGGSTFKNPAGHKAWQLVDAAGCRGLMVGGAQVSEKHTNFLINTGDATSADIEALGEEVRRRVKDKSGIELQWEIQRVGKAE</sequence>
<dbReference type="EC" id="1.3.1.98" evidence="1"/>
<dbReference type="EMBL" id="CP000356">
    <property type="protein sequence ID" value="ABF53591.1"/>
    <property type="molecule type" value="Genomic_DNA"/>
</dbReference>
<dbReference type="RefSeq" id="WP_011542169.1">
    <property type="nucleotide sequence ID" value="NC_008048.1"/>
</dbReference>
<dbReference type="SMR" id="Q1GRY1"/>
<dbReference type="STRING" id="317655.Sala_1879"/>
<dbReference type="KEGG" id="sal:Sala_1879"/>
<dbReference type="eggNOG" id="COG0812">
    <property type="taxonomic scope" value="Bacteria"/>
</dbReference>
<dbReference type="HOGENOM" id="CLU_035304_1_0_5"/>
<dbReference type="OrthoDB" id="9804753at2"/>
<dbReference type="UniPathway" id="UPA00219"/>
<dbReference type="Proteomes" id="UP000006578">
    <property type="component" value="Chromosome"/>
</dbReference>
<dbReference type="GO" id="GO:0005829">
    <property type="term" value="C:cytosol"/>
    <property type="evidence" value="ECO:0007669"/>
    <property type="project" value="TreeGrafter"/>
</dbReference>
<dbReference type="GO" id="GO:0071949">
    <property type="term" value="F:FAD binding"/>
    <property type="evidence" value="ECO:0007669"/>
    <property type="project" value="InterPro"/>
</dbReference>
<dbReference type="GO" id="GO:0008762">
    <property type="term" value="F:UDP-N-acetylmuramate dehydrogenase activity"/>
    <property type="evidence" value="ECO:0007669"/>
    <property type="project" value="UniProtKB-UniRule"/>
</dbReference>
<dbReference type="GO" id="GO:0051301">
    <property type="term" value="P:cell division"/>
    <property type="evidence" value="ECO:0007669"/>
    <property type="project" value="UniProtKB-KW"/>
</dbReference>
<dbReference type="GO" id="GO:0071555">
    <property type="term" value="P:cell wall organization"/>
    <property type="evidence" value="ECO:0007669"/>
    <property type="project" value="UniProtKB-KW"/>
</dbReference>
<dbReference type="GO" id="GO:0009252">
    <property type="term" value="P:peptidoglycan biosynthetic process"/>
    <property type="evidence" value="ECO:0007669"/>
    <property type="project" value="UniProtKB-UniRule"/>
</dbReference>
<dbReference type="GO" id="GO:0008360">
    <property type="term" value="P:regulation of cell shape"/>
    <property type="evidence" value="ECO:0007669"/>
    <property type="project" value="UniProtKB-KW"/>
</dbReference>
<dbReference type="Gene3D" id="3.30.465.10">
    <property type="match status" value="1"/>
</dbReference>
<dbReference type="Gene3D" id="3.90.78.10">
    <property type="entry name" value="UDP-N-acetylenolpyruvoylglucosamine reductase, C-terminal domain"/>
    <property type="match status" value="1"/>
</dbReference>
<dbReference type="Gene3D" id="3.30.43.10">
    <property type="entry name" value="Uridine Diphospho-n-acetylenolpyruvylglucosamine Reductase, domain 2"/>
    <property type="match status" value="1"/>
</dbReference>
<dbReference type="HAMAP" id="MF_00037">
    <property type="entry name" value="MurB"/>
    <property type="match status" value="1"/>
</dbReference>
<dbReference type="InterPro" id="IPR016166">
    <property type="entry name" value="FAD-bd_PCMH"/>
</dbReference>
<dbReference type="InterPro" id="IPR036318">
    <property type="entry name" value="FAD-bd_PCMH-like_sf"/>
</dbReference>
<dbReference type="InterPro" id="IPR016167">
    <property type="entry name" value="FAD-bd_PCMH_sub1"/>
</dbReference>
<dbReference type="InterPro" id="IPR016169">
    <property type="entry name" value="FAD-bd_PCMH_sub2"/>
</dbReference>
<dbReference type="InterPro" id="IPR003170">
    <property type="entry name" value="MurB"/>
</dbReference>
<dbReference type="InterPro" id="IPR011601">
    <property type="entry name" value="MurB_C"/>
</dbReference>
<dbReference type="InterPro" id="IPR036635">
    <property type="entry name" value="MurB_C_sf"/>
</dbReference>
<dbReference type="InterPro" id="IPR006094">
    <property type="entry name" value="Oxid_FAD_bind_N"/>
</dbReference>
<dbReference type="NCBIfam" id="TIGR00179">
    <property type="entry name" value="murB"/>
    <property type="match status" value="1"/>
</dbReference>
<dbReference type="NCBIfam" id="NF010480">
    <property type="entry name" value="PRK13905.1"/>
    <property type="match status" value="1"/>
</dbReference>
<dbReference type="PANTHER" id="PTHR21071">
    <property type="entry name" value="UDP-N-ACETYLENOLPYRUVOYLGLUCOSAMINE REDUCTASE"/>
    <property type="match status" value="1"/>
</dbReference>
<dbReference type="PANTHER" id="PTHR21071:SF4">
    <property type="entry name" value="UDP-N-ACETYLENOLPYRUVOYLGLUCOSAMINE REDUCTASE"/>
    <property type="match status" value="1"/>
</dbReference>
<dbReference type="Pfam" id="PF01565">
    <property type="entry name" value="FAD_binding_4"/>
    <property type="match status" value="1"/>
</dbReference>
<dbReference type="Pfam" id="PF02873">
    <property type="entry name" value="MurB_C"/>
    <property type="match status" value="1"/>
</dbReference>
<dbReference type="SUPFAM" id="SSF56176">
    <property type="entry name" value="FAD-binding/transporter-associated domain-like"/>
    <property type="match status" value="1"/>
</dbReference>
<dbReference type="SUPFAM" id="SSF56194">
    <property type="entry name" value="Uridine diphospho-N-Acetylenolpyruvylglucosamine reductase, MurB, C-terminal domain"/>
    <property type="match status" value="1"/>
</dbReference>
<dbReference type="PROSITE" id="PS51387">
    <property type="entry name" value="FAD_PCMH"/>
    <property type="match status" value="1"/>
</dbReference>
<name>MURB_SPHAL</name>
<proteinExistence type="inferred from homology"/>
<accession>Q1GRY1</accession>